<name>CEP41_RAT</name>
<accession>Q4KM37</accession>
<accession>F1LXL2</accession>
<reference key="1">
    <citation type="journal article" date="2004" name="Nature">
        <title>Genome sequence of the Brown Norway rat yields insights into mammalian evolution.</title>
        <authorList>
            <person name="Gibbs R.A."/>
            <person name="Weinstock G.M."/>
            <person name="Metzker M.L."/>
            <person name="Muzny D.M."/>
            <person name="Sodergren E.J."/>
            <person name="Scherer S."/>
            <person name="Scott G."/>
            <person name="Steffen D."/>
            <person name="Worley K.C."/>
            <person name="Burch P.E."/>
            <person name="Okwuonu G."/>
            <person name="Hines S."/>
            <person name="Lewis L."/>
            <person name="Deramo C."/>
            <person name="Delgado O."/>
            <person name="Dugan-Rocha S."/>
            <person name="Miner G."/>
            <person name="Morgan M."/>
            <person name="Hawes A."/>
            <person name="Gill R."/>
            <person name="Holt R.A."/>
            <person name="Adams M.D."/>
            <person name="Amanatides P.G."/>
            <person name="Baden-Tillson H."/>
            <person name="Barnstead M."/>
            <person name="Chin S."/>
            <person name="Evans C.A."/>
            <person name="Ferriera S."/>
            <person name="Fosler C."/>
            <person name="Glodek A."/>
            <person name="Gu Z."/>
            <person name="Jennings D."/>
            <person name="Kraft C.L."/>
            <person name="Nguyen T."/>
            <person name="Pfannkoch C.M."/>
            <person name="Sitter C."/>
            <person name="Sutton G.G."/>
            <person name="Venter J.C."/>
            <person name="Woodage T."/>
            <person name="Smith D."/>
            <person name="Lee H.-M."/>
            <person name="Gustafson E."/>
            <person name="Cahill P."/>
            <person name="Kana A."/>
            <person name="Doucette-Stamm L."/>
            <person name="Weinstock K."/>
            <person name="Fechtel K."/>
            <person name="Weiss R.B."/>
            <person name="Dunn D.M."/>
            <person name="Green E.D."/>
            <person name="Blakesley R.W."/>
            <person name="Bouffard G.G."/>
            <person name="De Jong P.J."/>
            <person name="Osoegawa K."/>
            <person name="Zhu B."/>
            <person name="Marra M."/>
            <person name="Schein J."/>
            <person name="Bosdet I."/>
            <person name="Fjell C."/>
            <person name="Jones S."/>
            <person name="Krzywinski M."/>
            <person name="Mathewson C."/>
            <person name="Siddiqui A."/>
            <person name="Wye N."/>
            <person name="McPherson J."/>
            <person name="Zhao S."/>
            <person name="Fraser C.M."/>
            <person name="Shetty J."/>
            <person name="Shatsman S."/>
            <person name="Geer K."/>
            <person name="Chen Y."/>
            <person name="Abramzon S."/>
            <person name="Nierman W.C."/>
            <person name="Havlak P.H."/>
            <person name="Chen R."/>
            <person name="Durbin K.J."/>
            <person name="Egan A."/>
            <person name="Ren Y."/>
            <person name="Song X.-Z."/>
            <person name="Li B."/>
            <person name="Liu Y."/>
            <person name="Qin X."/>
            <person name="Cawley S."/>
            <person name="Cooney A.J."/>
            <person name="D'Souza L.M."/>
            <person name="Martin K."/>
            <person name="Wu J.Q."/>
            <person name="Gonzalez-Garay M.L."/>
            <person name="Jackson A.R."/>
            <person name="Kalafus K.J."/>
            <person name="McLeod M.P."/>
            <person name="Milosavljevic A."/>
            <person name="Virk D."/>
            <person name="Volkov A."/>
            <person name="Wheeler D.A."/>
            <person name="Zhang Z."/>
            <person name="Bailey J.A."/>
            <person name="Eichler E.E."/>
            <person name="Tuzun E."/>
            <person name="Birney E."/>
            <person name="Mongin E."/>
            <person name="Ureta-Vidal A."/>
            <person name="Woodwark C."/>
            <person name="Zdobnov E."/>
            <person name="Bork P."/>
            <person name="Suyama M."/>
            <person name="Torrents D."/>
            <person name="Alexandersson M."/>
            <person name="Trask B.J."/>
            <person name="Young J.M."/>
            <person name="Huang H."/>
            <person name="Wang H."/>
            <person name="Xing H."/>
            <person name="Daniels S."/>
            <person name="Gietzen D."/>
            <person name="Schmidt J."/>
            <person name="Stevens K."/>
            <person name="Vitt U."/>
            <person name="Wingrove J."/>
            <person name="Camara F."/>
            <person name="Mar Alba M."/>
            <person name="Abril J.F."/>
            <person name="Guigo R."/>
            <person name="Smit A."/>
            <person name="Dubchak I."/>
            <person name="Rubin E.M."/>
            <person name="Couronne O."/>
            <person name="Poliakov A."/>
            <person name="Huebner N."/>
            <person name="Ganten D."/>
            <person name="Goesele C."/>
            <person name="Hummel O."/>
            <person name="Kreitler T."/>
            <person name="Lee Y.-A."/>
            <person name="Monti J."/>
            <person name="Schulz H."/>
            <person name="Zimdahl H."/>
            <person name="Himmelbauer H."/>
            <person name="Lehrach H."/>
            <person name="Jacob H.J."/>
            <person name="Bromberg S."/>
            <person name="Gullings-Handley J."/>
            <person name="Jensen-Seaman M.I."/>
            <person name="Kwitek A.E."/>
            <person name="Lazar J."/>
            <person name="Pasko D."/>
            <person name="Tonellato P.J."/>
            <person name="Twigger S."/>
            <person name="Ponting C.P."/>
            <person name="Duarte J.M."/>
            <person name="Rice S."/>
            <person name="Goodstadt L."/>
            <person name="Beatson S.A."/>
            <person name="Emes R.D."/>
            <person name="Winter E.E."/>
            <person name="Webber C."/>
            <person name="Brandt P."/>
            <person name="Nyakatura G."/>
            <person name="Adetobi M."/>
            <person name="Chiaromonte F."/>
            <person name="Elnitski L."/>
            <person name="Eswara P."/>
            <person name="Hardison R.C."/>
            <person name="Hou M."/>
            <person name="Kolbe D."/>
            <person name="Makova K."/>
            <person name="Miller W."/>
            <person name="Nekrutenko A."/>
            <person name="Riemer C."/>
            <person name="Schwartz S."/>
            <person name="Taylor J."/>
            <person name="Yang S."/>
            <person name="Zhang Y."/>
            <person name="Lindpaintner K."/>
            <person name="Andrews T.D."/>
            <person name="Caccamo M."/>
            <person name="Clamp M."/>
            <person name="Clarke L."/>
            <person name="Curwen V."/>
            <person name="Durbin R.M."/>
            <person name="Eyras E."/>
            <person name="Searle S.M."/>
            <person name="Cooper G.M."/>
            <person name="Batzoglou S."/>
            <person name="Brudno M."/>
            <person name="Sidow A."/>
            <person name="Stone E.A."/>
            <person name="Payseur B.A."/>
            <person name="Bourque G."/>
            <person name="Lopez-Otin C."/>
            <person name="Puente X.S."/>
            <person name="Chakrabarti K."/>
            <person name="Chatterji S."/>
            <person name="Dewey C."/>
            <person name="Pachter L."/>
            <person name="Bray N."/>
            <person name="Yap V.B."/>
            <person name="Caspi A."/>
            <person name="Tesler G."/>
            <person name="Pevzner P.A."/>
            <person name="Haussler D."/>
            <person name="Roskin K.M."/>
            <person name="Baertsch R."/>
            <person name="Clawson H."/>
            <person name="Furey T.S."/>
            <person name="Hinrichs A.S."/>
            <person name="Karolchik D."/>
            <person name="Kent W.J."/>
            <person name="Rosenbloom K.R."/>
            <person name="Trumbower H."/>
            <person name="Weirauch M."/>
            <person name="Cooper D.N."/>
            <person name="Stenson P.D."/>
            <person name="Ma B."/>
            <person name="Brent M."/>
            <person name="Arumugam M."/>
            <person name="Shteynberg D."/>
            <person name="Copley R.R."/>
            <person name="Taylor M.S."/>
            <person name="Riethman H."/>
            <person name="Mudunuri U."/>
            <person name="Peterson J."/>
            <person name="Guyer M."/>
            <person name="Felsenfeld A."/>
            <person name="Old S."/>
            <person name="Mockrin S."/>
            <person name="Collins F.S."/>
        </authorList>
    </citation>
    <scope>NUCLEOTIDE SEQUENCE [LARGE SCALE GENOMIC DNA]</scope>
    <source>
        <strain>Brown Norway</strain>
    </source>
</reference>
<reference key="2">
    <citation type="journal article" date="2004" name="Genome Res.">
        <title>The status, quality, and expansion of the NIH full-length cDNA project: the Mammalian Gene Collection (MGC).</title>
        <authorList>
            <consortium name="The MGC Project Team"/>
        </authorList>
    </citation>
    <scope>NUCLEOTIDE SEQUENCE [LARGE SCALE MRNA]</scope>
    <source>
        <tissue>Spleen</tissue>
    </source>
</reference>
<reference key="3">
    <citation type="journal article" date="2012" name="Nat. Commun.">
        <title>Quantitative maps of protein phosphorylation sites across 14 different rat organs and tissues.</title>
        <authorList>
            <person name="Lundby A."/>
            <person name="Secher A."/>
            <person name="Lage K."/>
            <person name="Nordsborg N.B."/>
            <person name="Dmytriyev A."/>
            <person name="Lundby C."/>
            <person name="Olsen J.V."/>
        </authorList>
    </citation>
    <scope>PHOSPHORYLATION [LARGE SCALE ANALYSIS] AT SER-62; SER-65; SER-80 AND SER-87</scope>
    <scope>IDENTIFICATION BY MASS SPECTROMETRY [LARGE SCALE ANALYSIS]</scope>
</reference>
<gene>
    <name type="primary">Cep41</name>
    <name type="synonym">Tsga14</name>
</gene>
<organism>
    <name type="scientific">Rattus norvegicus</name>
    <name type="common">Rat</name>
    <dbReference type="NCBI Taxonomy" id="10116"/>
    <lineage>
        <taxon>Eukaryota</taxon>
        <taxon>Metazoa</taxon>
        <taxon>Chordata</taxon>
        <taxon>Craniata</taxon>
        <taxon>Vertebrata</taxon>
        <taxon>Euteleostomi</taxon>
        <taxon>Mammalia</taxon>
        <taxon>Eutheria</taxon>
        <taxon>Euarchontoglires</taxon>
        <taxon>Glires</taxon>
        <taxon>Rodentia</taxon>
        <taxon>Myomorpha</taxon>
        <taxon>Muroidea</taxon>
        <taxon>Muridae</taxon>
        <taxon>Murinae</taxon>
        <taxon>Rattus</taxon>
    </lineage>
</organism>
<dbReference type="EMBL" id="BC098832">
    <property type="protein sequence ID" value="AAH98832.1"/>
    <property type="molecule type" value="mRNA"/>
</dbReference>
<dbReference type="RefSeq" id="NP_001020941.1">
    <property type="nucleotide sequence ID" value="NM_001025770.2"/>
</dbReference>
<dbReference type="SMR" id="Q4KM37"/>
<dbReference type="FunCoup" id="Q4KM37">
    <property type="interactions" value="2354"/>
</dbReference>
<dbReference type="STRING" id="10116.ENSRNOP00000068210"/>
<dbReference type="iPTMnet" id="Q4KM37"/>
<dbReference type="PhosphoSitePlus" id="Q4KM37"/>
<dbReference type="PaxDb" id="10116-ENSRNOP00000014621"/>
<dbReference type="Ensembl" id="ENSRNOT00000014621.7">
    <property type="protein sequence ID" value="ENSRNOP00000014621.4"/>
    <property type="gene ID" value="ENSRNOG00000010950.9"/>
</dbReference>
<dbReference type="GeneID" id="500069"/>
<dbReference type="KEGG" id="rno:500069"/>
<dbReference type="UCSC" id="RGD:1562034">
    <property type="organism name" value="rat"/>
</dbReference>
<dbReference type="AGR" id="RGD:1562034"/>
<dbReference type="CTD" id="95681"/>
<dbReference type="RGD" id="1562034">
    <property type="gene designation" value="Cep41"/>
</dbReference>
<dbReference type="eggNOG" id="ENOG502QR8A">
    <property type="taxonomic scope" value="Eukaryota"/>
</dbReference>
<dbReference type="GeneTree" id="ENSGT00390000002222"/>
<dbReference type="InParanoid" id="Q4KM37"/>
<dbReference type="PhylomeDB" id="Q4KM37"/>
<dbReference type="Reactome" id="R-RNO-2565942">
    <property type="pathway name" value="Regulation of PLK1 Activity at G2/M Transition"/>
</dbReference>
<dbReference type="Reactome" id="R-RNO-380259">
    <property type="pathway name" value="Loss of Nlp from mitotic centrosomes"/>
</dbReference>
<dbReference type="Reactome" id="R-RNO-380270">
    <property type="pathway name" value="Recruitment of mitotic centrosome proteins and complexes"/>
</dbReference>
<dbReference type="Reactome" id="R-RNO-380284">
    <property type="pathway name" value="Loss of proteins required for interphase microtubule organization from the centrosome"/>
</dbReference>
<dbReference type="Reactome" id="R-RNO-380320">
    <property type="pathway name" value="Recruitment of NuMA to mitotic centrosomes"/>
</dbReference>
<dbReference type="Reactome" id="R-RNO-5620912">
    <property type="pathway name" value="Anchoring of the basal body to the plasma membrane"/>
</dbReference>
<dbReference type="Reactome" id="R-RNO-8854518">
    <property type="pathway name" value="AURKA Activation by TPX2"/>
</dbReference>
<dbReference type="PRO" id="PR:Q4KM37"/>
<dbReference type="Proteomes" id="UP000002494">
    <property type="component" value="Chromosome 4"/>
</dbReference>
<dbReference type="Bgee" id="ENSRNOG00000010950">
    <property type="expression patterns" value="Expressed in testis and 19 other cell types or tissues"/>
</dbReference>
<dbReference type="ExpressionAtlas" id="Q4KM37">
    <property type="expression patterns" value="baseline and differential"/>
</dbReference>
<dbReference type="GO" id="GO:0005814">
    <property type="term" value="C:centriole"/>
    <property type="evidence" value="ECO:0000250"/>
    <property type="project" value="UniProtKB"/>
</dbReference>
<dbReference type="GO" id="GO:0005813">
    <property type="term" value="C:centrosome"/>
    <property type="evidence" value="ECO:0000266"/>
    <property type="project" value="RGD"/>
</dbReference>
<dbReference type="GO" id="GO:0036064">
    <property type="term" value="C:ciliary basal body"/>
    <property type="evidence" value="ECO:0000250"/>
    <property type="project" value="UniProtKB"/>
</dbReference>
<dbReference type="GO" id="GO:0005929">
    <property type="term" value="C:cilium"/>
    <property type="evidence" value="ECO:0000250"/>
    <property type="project" value="UniProtKB"/>
</dbReference>
<dbReference type="GO" id="GO:0005737">
    <property type="term" value="C:cytoplasm"/>
    <property type="evidence" value="ECO:0007669"/>
    <property type="project" value="UniProtKB-KW"/>
</dbReference>
<dbReference type="GO" id="GO:0060271">
    <property type="term" value="P:cilium assembly"/>
    <property type="evidence" value="ECO:0000250"/>
    <property type="project" value="UniProtKB"/>
</dbReference>
<dbReference type="GO" id="GO:0018095">
    <property type="term" value="P:protein polyglutamylation"/>
    <property type="evidence" value="ECO:0000250"/>
    <property type="project" value="UniProtKB"/>
</dbReference>
<dbReference type="GO" id="GO:0015031">
    <property type="term" value="P:protein transport"/>
    <property type="evidence" value="ECO:0007669"/>
    <property type="project" value="UniProtKB-KW"/>
</dbReference>
<dbReference type="CDD" id="cd00158">
    <property type="entry name" value="RHOD"/>
    <property type="match status" value="1"/>
</dbReference>
<dbReference type="FunFam" id="3.40.250.10:FF:000012">
    <property type="entry name" value="Centrosomal protein of 41 kDa"/>
    <property type="match status" value="1"/>
</dbReference>
<dbReference type="Gene3D" id="3.40.250.10">
    <property type="entry name" value="Rhodanese-like domain"/>
    <property type="match status" value="1"/>
</dbReference>
<dbReference type="InterPro" id="IPR051889">
    <property type="entry name" value="CEP41"/>
</dbReference>
<dbReference type="InterPro" id="IPR001763">
    <property type="entry name" value="Rhodanese-like_dom"/>
</dbReference>
<dbReference type="InterPro" id="IPR036873">
    <property type="entry name" value="Rhodanese-like_dom_sf"/>
</dbReference>
<dbReference type="PANTHER" id="PTHR44390">
    <property type="entry name" value="CENTROSOMAL PROTEIN OF 41 KDA"/>
    <property type="match status" value="1"/>
</dbReference>
<dbReference type="PANTHER" id="PTHR44390:SF1">
    <property type="entry name" value="CENTROSOMAL PROTEIN OF 41 KDA"/>
    <property type="match status" value="1"/>
</dbReference>
<dbReference type="Pfam" id="PF00581">
    <property type="entry name" value="Rhodanese"/>
    <property type="match status" value="1"/>
</dbReference>
<dbReference type="SMART" id="SM00450">
    <property type="entry name" value="RHOD"/>
    <property type="match status" value="1"/>
</dbReference>
<dbReference type="SUPFAM" id="SSF52821">
    <property type="entry name" value="Rhodanese/Cell cycle control phosphatase"/>
    <property type="match status" value="1"/>
</dbReference>
<dbReference type="PROSITE" id="PS50206">
    <property type="entry name" value="RHODANESE_3"/>
    <property type="match status" value="1"/>
</dbReference>
<evidence type="ECO:0000250" key="1"/>
<evidence type="ECO:0000250" key="2">
    <source>
        <dbReference type="UniProtKB" id="Q99NF3"/>
    </source>
</evidence>
<evidence type="ECO:0000255" key="3">
    <source>
        <dbReference type="PROSITE-ProRule" id="PRU00173"/>
    </source>
</evidence>
<evidence type="ECO:0000256" key="4">
    <source>
        <dbReference type="SAM" id="MobiDB-lite"/>
    </source>
</evidence>
<evidence type="ECO:0000305" key="5"/>
<evidence type="ECO:0007744" key="6">
    <source>
    </source>
</evidence>
<protein>
    <recommendedName>
        <fullName>Centrosomal protein of 41 kDa</fullName>
        <shortName>Cep41</shortName>
    </recommendedName>
    <alternativeName>
        <fullName>Testis-specific gene A14 protein</fullName>
    </alternativeName>
</protein>
<comment type="function">
    <text evidence="1">Required during ciliogenesis for tubulin glutamylation in cilium. Probably acts by participating in the transport of TTLL6, a tubulin polyglutamylase, between the basal body and the cilium (By similarity).</text>
</comment>
<comment type="subunit">
    <text evidence="1">Found in a complex with TTLL6.</text>
</comment>
<comment type="subcellular location">
    <subcellularLocation>
        <location evidence="1">Cytoplasm</location>
        <location evidence="1">Cytoskeleton</location>
        <location evidence="1">Microtubule organizing center</location>
        <location evidence="1">Centrosome</location>
    </subcellularLocation>
    <subcellularLocation>
        <location evidence="1">Cell projection</location>
        <location evidence="1">Cilium</location>
    </subcellularLocation>
    <subcellularLocation>
        <location evidence="1">Cytoplasm</location>
        <location evidence="1">Cytoskeleton</location>
        <location evidence="1">Cilium basal body</location>
    </subcellularLocation>
    <text evidence="1">Localizes mainly to the cilium basal body and in primary cilia.</text>
</comment>
<comment type="similarity">
    <text evidence="5">Belongs to the CEP41 family.</text>
</comment>
<proteinExistence type="evidence at protein level"/>
<feature type="chain" id="PRO_0000416265" description="Centrosomal protein of 41 kDa">
    <location>
        <begin position="1"/>
        <end position="339"/>
    </location>
</feature>
<feature type="domain" description="Rhodanese" evidence="3">
    <location>
        <begin position="135"/>
        <end position="232"/>
    </location>
</feature>
<feature type="region of interest" description="Disordered" evidence="4">
    <location>
        <begin position="56"/>
        <end position="99"/>
    </location>
</feature>
<feature type="region of interest" description="Disordered" evidence="4">
    <location>
        <begin position="283"/>
        <end position="339"/>
    </location>
</feature>
<feature type="compositionally biased region" description="Low complexity" evidence="4">
    <location>
        <begin position="62"/>
        <end position="73"/>
    </location>
</feature>
<feature type="compositionally biased region" description="Polar residues" evidence="4">
    <location>
        <begin position="82"/>
        <end position="99"/>
    </location>
</feature>
<feature type="compositionally biased region" description="Polar residues" evidence="4">
    <location>
        <begin position="286"/>
        <end position="299"/>
    </location>
</feature>
<feature type="compositionally biased region" description="Polar residues" evidence="4">
    <location>
        <begin position="313"/>
        <end position="332"/>
    </location>
</feature>
<feature type="modified residue" description="Phosphoserine" evidence="6">
    <location>
        <position position="62"/>
    </location>
</feature>
<feature type="modified residue" description="Phosphoserine" evidence="6">
    <location>
        <position position="65"/>
    </location>
</feature>
<feature type="modified residue" description="Phosphothreonine" evidence="2">
    <location>
        <position position="75"/>
    </location>
</feature>
<feature type="modified residue" description="Phosphoserine" evidence="6">
    <location>
        <position position="80"/>
    </location>
</feature>
<feature type="modified residue" description="Phosphoserine" evidence="6">
    <location>
        <position position="87"/>
    </location>
</feature>
<feature type="modified residue" description="Omega-N-methylarginine" evidence="2">
    <location>
        <position position="309"/>
    </location>
</feature>
<keyword id="KW-0966">Cell projection</keyword>
<keyword id="KW-1186">Ciliopathy</keyword>
<keyword id="KW-0969">Cilium</keyword>
<keyword id="KW-0970">Cilium biogenesis/degradation</keyword>
<keyword id="KW-0963">Cytoplasm</keyword>
<keyword id="KW-0206">Cytoskeleton</keyword>
<keyword id="KW-0488">Methylation</keyword>
<keyword id="KW-0597">Phosphoprotein</keyword>
<keyword id="KW-0653">Protein transport</keyword>
<keyword id="KW-1185">Reference proteome</keyword>
<keyword id="KW-0813">Transport</keyword>
<sequence>MSDSPIDGSPQPEPDYRYKKDELFKRIKVTTFAQLVIQVASLSDQTLEVTAEEIQRLEDSDSATSEADTDIAAKTNGKGSPEEQSPSPVQFINSTGAGDASRSTLQSVISGVGELDVDKGLVKKEEPSGKDKPYPDCPFLLLDVRDRDSYQQCHIVGAYSYPIATLSRTMNPYSNDILEYKNAHGKIIILYDDDERLASQAATTMCERGFENLFMLSGGLKVLAQKFPEGLVTGSLPASCQQALPFGSVRKRPGPKMPALPAENKWRFTPEDLKKIECYLEADQGPANNPSRLNQNNSAGRDLKVPAGRGGQNLPTGCPTSHSNSRTLNSGHLQGKPWK</sequence>